<comment type="function">
    <text>Actins are highly conserved proteins that are involved in various types of cell motility and are ubiquitously expressed in all eukaryotic cells. Essential component of cell cytoskeleton; plays an important role in cytoplasmic streaming, cell shape determination, cell division, organelle movement and extension growth.</text>
</comment>
<comment type="catalytic activity">
    <reaction evidence="1">
        <text>ATP + H2O = ADP + phosphate + H(+)</text>
        <dbReference type="Rhea" id="RHEA:13065"/>
        <dbReference type="ChEBI" id="CHEBI:15377"/>
        <dbReference type="ChEBI" id="CHEBI:15378"/>
        <dbReference type="ChEBI" id="CHEBI:30616"/>
        <dbReference type="ChEBI" id="CHEBI:43474"/>
        <dbReference type="ChEBI" id="CHEBI:456216"/>
    </reaction>
</comment>
<comment type="subcellular location">
    <subcellularLocation>
        <location>Cytoplasm</location>
        <location>Cytoskeleton</location>
    </subcellularLocation>
</comment>
<comment type="miscellaneous">
    <text>There are at least 13 actin genes in potato.</text>
</comment>
<comment type="similarity">
    <text evidence="2">Belongs to the actin family.</text>
</comment>
<organism>
    <name type="scientific">Solanum tuberosum</name>
    <name type="common">Potato</name>
    <dbReference type="NCBI Taxonomy" id="4113"/>
    <lineage>
        <taxon>Eukaryota</taxon>
        <taxon>Viridiplantae</taxon>
        <taxon>Streptophyta</taxon>
        <taxon>Embryophyta</taxon>
        <taxon>Tracheophyta</taxon>
        <taxon>Spermatophyta</taxon>
        <taxon>Magnoliopsida</taxon>
        <taxon>eudicotyledons</taxon>
        <taxon>Gunneridae</taxon>
        <taxon>Pentapetalae</taxon>
        <taxon>asterids</taxon>
        <taxon>lamiids</taxon>
        <taxon>Solanales</taxon>
        <taxon>Solanaceae</taxon>
        <taxon>Solanoideae</taxon>
        <taxon>Solaneae</taxon>
        <taxon>Solanum</taxon>
    </lineage>
</organism>
<evidence type="ECO:0000250" key="1">
    <source>
        <dbReference type="UniProtKB" id="P68137"/>
    </source>
</evidence>
<evidence type="ECO:0000305" key="2"/>
<dbReference type="EC" id="3.6.4.-" evidence="1"/>
<dbReference type="EMBL" id="U60484">
    <property type="protein sequence ID" value="AAB40097.1"/>
    <property type="molecule type" value="Genomic_DNA"/>
</dbReference>
<dbReference type="SMR" id="P81229"/>
<dbReference type="STRING" id="4113.P81229"/>
<dbReference type="InParanoid" id="P81229"/>
<dbReference type="Proteomes" id="UP000011115">
    <property type="component" value="Unassembled WGS sequence"/>
</dbReference>
<dbReference type="ExpressionAtlas" id="P81229">
    <property type="expression patterns" value="baseline and differential"/>
</dbReference>
<dbReference type="GO" id="GO:0015629">
    <property type="term" value="C:actin cytoskeleton"/>
    <property type="evidence" value="ECO:0000318"/>
    <property type="project" value="GO_Central"/>
</dbReference>
<dbReference type="GO" id="GO:0005737">
    <property type="term" value="C:cytoplasm"/>
    <property type="evidence" value="ECO:0007669"/>
    <property type="project" value="UniProtKB-KW"/>
</dbReference>
<dbReference type="GO" id="GO:0005524">
    <property type="term" value="F:ATP binding"/>
    <property type="evidence" value="ECO:0007669"/>
    <property type="project" value="UniProtKB-KW"/>
</dbReference>
<dbReference type="GO" id="GO:0016787">
    <property type="term" value="F:hydrolase activity"/>
    <property type="evidence" value="ECO:0007669"/>
    <property type="project" value="UniProtKB-KW"/>
</dbReference>
<dbReference type="CDD" id="cd10224">
    <property type="entry name" value="ASKHA_NBD_actin"/>
    <property type="match status" value="1"/>
</dbReference>
<dbReference type="FunFam" id="2.30.36.70:FF:000001">
    <property type="entry name" value="Actin, alpha skeletal muscle"/>
    <property type="match status" value="1"/>
</dbReference>
<dbReference type="FunFam" id="3.30.420.40:FF:000291">
    <property type="entry name" value="Actin, alpha skeletal muscle"/>
    <property type="match status" value="1"/>
</dbReference>
<dbReference type="FunFam" id="3.90.640.10:FF:000001">
    <property type="entry name" value="Actin, muscle"/>
    <property type="match status" value="1"/>
</dbReference>
<dbReference type="FunFam" id="3.30.420.40:FF:000404">
    <property type="entry name" value="Major actin"/>
    <property type="match status" value="1"/>
</dbReference>
<dbReference type="Gene3D" id="3.30.420.40">
    <property type="match status" value="2"/>
</dbReference>
<dbReference type="Gene3D" id="3.90.640.10">
    <property type="entry name" value="Actin, Chain A, domain 4"/>
    <property type="match status" value="1"/>
</dbReference>
<dbReference type="InterPro" id="IPR004000">
    <property type="entry name" value="Actin"/>
</dbReference>
<dbReference type="InterPro" id="IPR020902">
    <property type="entry name" value="Actin/actin-like_CS"/>
</dbReference>
<dbReference type="InterPro" id="IPR004001">
    <property type="entry name" value="Actin_CS"/>
</dbReference>
<dbReference type="InterPro" id="IPR043129">
    <property type="entry name" value="ATPase_NBD"/>
</dbReference>
<dbReference type="PANTHER" id="PTHR11937">
    <property type="entry name" value="ACTIN"/>
    <property type="match status" value="1"/>
</dbReference>
<dbReference type="Pfam" id="PF00022">
    <property type="entry name" value="Actin"/>
    <property type="match status" value="1"/>
</dbReference>
<dbReference type="PRINTS" id="PR00190">
    <property type="entry name" value="ACTIN"/>
</dbReference>
<dbReference type="SMART" id="SM00268">
    <property type="entry name" value="ACTIN"/>
    <property type="match status" value="1"/>
</dbReference>
<dbReference type="SUPFAM" id="SSF53067">
    <property type="entry name" value="Actin-like ATPase domain"/>
    <property type="match status" value="2"/>
</dbReference>
<dbReference type="PROSITE" id="PS00406">
    <property type="entry name" value="ACTINS_1"/>
    <property type="match status" value="1"/>
</dbReference>
<dbReference type="PROSITE" id="PS01132">
    <property type="entry name" value="ACTINS_ACT_LIKE"/>
    <property type="match status" value="1"/>
</dbReference>
<accession>P81229</accession>
<name>ACT8_SOLTU</name>
<keyword id="KW-0067">ATP-binding</keyword>
<keyword id="KW-0963">Cytoplasm</keyword>
<keyword id="KW-0206">Cytoskeleton</keyword>
<keyword id="KW-0378">Hydrolase</keyword>
<keyword id="KW-0547">Nucleotide-binding</keyword>
<keyword id="KW-1185">Reference proteome</keyword>
<proteinExistence type="inferred from homology"/>
<sequence>AGFAGDDAPRAVFPSIVGRPRHTGVMVGMGQKDAYVGDEAQSKRGILTLKYPIEHGIVSNWDDMEKIWHHTFYNELRVAPEEHPVLLTEAPLNPKANREKMTQIMFETFNTPAMYVAIQAVLSLYASGRTTGIVLDSGDGVSHTVPIYEGYALPHAILRLDLAGRDLTDHLMKILTERGYSFTTTAEREIVRDVKEKLSYIALDYEQEIETAKTSSSVEKSYELPDGQVIPIGAERFRCPEVLFQPSMIGMEAAGIHETTYNSIMKCDVDIRKDLYGNIVLSGGTTMFPGIADRMSKEITALAPSSMKIKVVAPPERKYSVWIGGSILASLSTFQQ</sequence>
<reference key="1">
    <citation type="journal article" date="1996" name="Mol. Biol. Evol.">
        <title>Phylogeny and substitution rates of angiosperm actin genes.</title>
        <authorList>
            <person name="Moniz de Sa M."/>
            <person name="Drouin G."/>
        </authorList>
    </citation>
    <scope>NUCLEOTIDE SEQUENCE [GENOMIC DNA]</scope>
</reference>
<feature type="chain" id="PRO_0000089015" description="Actin-79">
    <location>
        <begin position="1" status="less than"/>
        <end position="336" status="greater than"/>
    </location>
</feature>
<feature type="non-terminal residue">
    <location>
        <position position="1"/>
    </location>
</feature>
<feature type="non-terminal residue">
    <location>
        <position position="336"/>
    </location>
</feature>
<protein>
    <recommendedName>
        <fullName>Actin-79</fullName>
        <ecNumber evidence="1">3.6.4.-</ecNumber>
    </recommendedName>
</protein>